<sequence length="163" mass="17568">MDATSLATLWATIALIIFLGVAIYIKVPGLIAKALDARAARISSELDEARKLRDEAQQLLGQYKKKRKEAEQEAADIVAAAKREAEMLATEAHKKTEDYVIRRTALAEQKIGQAERDAVAEVRASAVDIAVEAARALLAAKVDVKAGADLFKASLADVKAKLN</sequence>
<accession>Q986D1</accession>
<reference key="1">
    <citation type="journal article" date="2000" name="DNA Res.">
        <title>Complete genome structure of the nitrogen-fixing symbiotic bacterium Mesorhizobium loti.</title>
        <authorList>
            <person name="Kaneko T."/>
            <person name="Nakamura Y."/>
            <person name="Sato S."/>
            <person name="Asamizu E."/>
            <person name="Kato T."/>
            <person name="Sasamoto S."/>
            <person name="Watanabe A."/>
            <person name="Idesawa K."/>
            <person name="Ishikawa A."/>
            <person name="Kawashima K."/>
            <person name="Kimura T."/>
            <person name="Kishida Y."/>
            <person name="Kiyokawa C."/>
            <person name="Kohara M."/>
            <person name="Matsumoto M."/>
            <person name="Matsuno A."/>
            <person name="Mochizuki Y."/>
            <person name="Nakayama S."/>
            <person name="Nakazaki N."/>
            <person name="Shimpo S."/>
            <person name="Sugimoto M."/>
            <person name="Takeuchi C."/>
            <person name="Yamada M."/>
            <person name="Tabata S."/>
        </authorList>
    </citation>
    <scope>NUCLEOTIDE SEQUENCE [LARGE SCALE GENOMIC DNA]</scope>
    <source>
        <strain>LMG 29417 / CECT 9101 / MAFF 303099</strain>
    </source>
</reference>
<name>ATPF2_RHILO</name>
<evidence type="ECO:0000255" key="1">
    <source>
        <dbReference type="HAMAP-Rule" id="MF_01398"/>
    </source>
</evidence>
<gene>
    <name evidence="1" type="primary">atpF2</name>
    <name type="ordered locus">mlr7415</name>
</gene>
<comment type="function">
    <text evidence="1">F(1)F(0) ATP synthase produces ATP from ADP in the presence of a proton or sodium gradient. F-type ATPases consist of two structural domains, F(1) containing the extramembraneous catalytic core and F(0) containing the membrane proton channel, linked together by a central stalk and a peripheral stalk. During catalysis, ATP synthesis in the catalytic domain of F(1) is coupled via a rotary mechanism of the central stalk subunits to proton translocation.</text>
</comment>
<comment type="function">
    <text evidence="1">Component of the F(0) channel, it forms part of the peripheral stalk, linking F(1) to F(0).</text>
</comment>
<comment type="subunit">
    <text evidence="1">F-type ATPases have 2 components, F(1) - the catalytic core - and F(0) - the membrane proton channel. F(1) has five subunits: alpha(3), beta(3), gamma(1), delta(1), epsilon(1). F(0) has three main subunits: a(1), b(2) and c(10-14). The alpha and beta chains form an alternating ring which encloses part of the gamma chain. F(1) is attached to F(0) by a central stalk formed by the gamma and epsilon chains, while a peripheral stalk is formed by the delta and b chains.</text>
</comment>
<comment type="subcellular location">
    <subcellularLocation>
        <location evidence="1">Cell inner membrane</location>
        <topology evidence="1">Single-pass membrane protein</topology>
    </subcellularLocation>
</comment>
<comment type="similarity">
    <text evidence="1">Belongs to the ATPase B chain family.</text>
</comment>
<feature type="chain" id="PRO_0000368712" description="ATP synthase subunit b 2">
    <location>
        <begin position="1"/>
        <end position="163"/>
    </location>
</feature>
<feature type="transmembrane region" description="Helical" evidence="1">
    <location>
        <begin position="5"/>
        <end position="25"/>
    </location>
</feature>
<keyword id="KW-0066">ATP synthesis</keyword>
<keyword id="KW-0997">Cell inner membrane</keyword>
<keyword id="KW-1003">Cell membrane</keyword>
<keyword id="KW-0138">CF(0)</keyword>
<keyword id="KW-0375">Hydrogen ion transport</keyword>
<keyword id="KW-0406">Ion transport</keyword>
<keyword id="KW-0472">Membrane</keyword>
<keyword id="KW-0812">Transmembrane</keyword>
<keyword id="KW-1133">Transmembrane helix</keyword>
<keyword id="KW-0813">Transport</keyword>
<dbReference type="EMBL" id="BA000012">
    <property type="protein sequence ID" value="BAB53522.1"/>
    <property type="molecule type" value="Genomic_DNA"/>
</dbReference>
<dbReference type="RefSeq" id="WP_010914829.1">
    <property type="nucleotide sequence ID" value="NC_002678.2"/>
</dbReference>
<dbReference type="SMR" id="Q986D1"/>
<dbReference type="KEGG" id="mlo:mlr7415"/>
<dbReference type="eggNOG" id="COG0711">
    <property type="taxonomic scope" value="Bacteria"/>
</dbReference>
<dbReference type="HOGENOM" id="CLU_079215_6_1_5"/>
<dbReference type="Proteomes" id="UP000000552">
    <property type="component" value="Chromosome"/>
</dbReference>
<dbReference type="GO" id="GO:0005886">
    <property type="term" value="C:plasma membrane"/>
    <property type="evidence" value="ECO:0007669"/>
    <property type="project" value="UniProtKB-SubCell"/>
</dbReference>
<dbReference type="GO" id="GO:0045259">
    <property type="term" value="C:proton-transporting ATP synthase complex"/>
    <property type="evidence" value="ECO:0007669"/>
    <property type="project" value="UniProtKB-KW"/>
</dbReference>
<dbReference type="GO" id="GO:0046933">
    <property type="term" value="F:proton-transporting ATP synthase activity, rotational mechanism"/>
    <property type="evidence" value="ECO:0007669"/>
    <property type="project" value="UniProtKB-UniRule"/>
</dbReference>
<dbReference type="GO" id="GO:0046961">
    <property type="term" value="F:proton-transporting ATPase activity, rotational mechanism"/>
    <property type="evidence" value="ECO:0007669"/>
    <property type="project" value="TreeGrafter"/>
</dbReference>
<dbReference type="CDD" id="cd06503">
    <property type="entry name" value="ATP-synt_Fo_b"/>
    <property type="match status" value="1"/>
</dbReference>
<dbReference type="HAMAP" id="MF_01398">
    <property type="entry name" value="ATP_synth_b_bprime"/>
    <property type="match status" value="1"/>
</dbReference>
<dbReference type="InterPro" id="IPR002146">
    <property type="entry name" value="ATP_synth_b/b'su_bac/chlpt"/>
</dbReference>
<dbReference type="InterPro" id="IPR050059">
    <property type="entry name" value="ATP_synthase_B_chain"/>
</dbReference>
<dbReference type="NCBIfam" id="NF006611">
    <property type="entry name" value="PRK09173.1"/>
    <property type="match status" value="1"/>
</dbReference>
<dbReference type="PANTHER" id="PTHR33445:SF1">
    <property type="entry name" value="ATP SYNTHASE SUBUNIT B"/>
    <property type="match status" value="1"/>
</dbReference>
<dbReference type="PANTHER" id="PTHR33445">
    <property type="entry name" value="ATP SYNTHASE SUBUNIT B', CHLOROPLASTIC"/>
    <property type="match status" value="1"/>
</dbReference>
<dbReference type="Pfam" id="PF00430">
    <property type="entry name" value="ATP-synt_B"/>
    <property type="match status" value="1"/>
</dbReference>
<organism>
    <name type="scientific">Mesorhizobium japonicum (strain LMG 29417 / CECT 9101 / MAFF 303099)</name>
    <name type="common">Mesorhizobium loti (strain MAFF 303099)</name>
    <dbReference type="NCBI Taxonomy" id="266835"/>
    <lineage>
        <taxon>Bacteria</taxon>
        <taxon>Pseudomonadati</taxon>
        <taxon>Pseudomonadota</taxon>
        <taxon>Alphaproteobacteria</taxon>
        <taxon>Hyphomicrobiales</taxon>
        <taxon>Phyllobacteriaceae</taxon>
        <taxon>Mesorhizobium</taxon>
    </lineage>
</organism>
<proteinExistence type="inferred from homology"/>
<protein>
    <recommendedName>
        <fullName evidence="1">ATP synthase subunit b 2</fullName>
    </recommendedName>
    <alternativeName>
        <fullName evidence="1">ATP synthase F(0) sector subunit b 2</fullName>
    </alternativeName>
    <alternativeName>
        <fullName evidence="1">ATPase subunit I 2</fullName>
    </alternativeName>
    <alternativeName>
        <fullName evidence="1">F-type ATPase subunit b 2</fullName>
        <shortName evidence="1">F-ATPase subunit b 2</shortName>
    </alternativeName>
</protein>